<gene>
    <name evidence="1" type="primary">queA</name>
    <name type="ordered locus">HNE_2757</name>
</gene>
<feature type="chain" id="PRO_1000015225" description="S-adenosylmethionine:tRNA ribosyltransferase-isomerase">
    <location>
        <begin position="1"/>
        <end position="351"/>
    </location>
</feature>
<protein>
    <recommendedName>
        <fullName evidence="1">S-adenosylmethionine:tRNA ribosyltransferase-isomerase</fullName>
        <ecNumber evidence="1">2.4.99.17</ecNumber>
    </recommendedName>
    <alternativeName>
        <fullName evidence="1">Queuosine biosynthesis protein QueA</fullName>
    </alternativeName>
</protein>
<organism>
    <name type="scientific">Hyphomonas neptunium (strain ATCC 15444)</name>
    <dbReference type="NCBI Taxonomy" id="228405"/>
    <lineage>
        <taxon>Bacteria</taxon>
        <taxon>Pseudomonadati</taxon>
        <taxon>Pseudomonadota</taxon>
        <taxon>Alphaproteobacteria</taxon>
        <taxon>Hyphomonadales</taxon>
        <taxon>Hyphomonadaceae</taxon>
        <taxon>Hyphomonas</taxon>
    </lineage>
</organism>
<comment type="function">
    <text evidence="1">Transfers and isomerizes the ribose moiety from AdoMet to the 7-aminomethyl group of 7-deazaguanine (preQ1-tRNA) to give epoxyqueuosine (oQ-tRNA).</text>
</comment>
<comment type="catalytic activity">
    <reaction evidence="1">
        <text>7-aminomethyl-7-carbaguanosine(34) in tRNA + S-adenosyl-L-methionine = epoxyqueuosine(34) in tRNA + adenine + L-methionine + 2 H(+)</text>
        <dbReference type="Rhea" id="RHEA:32155"/>
        <dbReference type="Rhea" id="RHEA-COMP:10342"/>
        <dbReference type="Rhea" id="RHEA-COMP:18582"/>
        <dbReference type="ChEBI" id="CHEBI:15378"/>
        <dbReference type="ChEBI" id="CHEBI:16708"/>
        <dbReference type="ChEBI" id="CHEBI:57844"/>
        <dbReference type="ChEBI" id="CHEBI:59789"/>
        <dbReference type="ChEBI" id="CHEBI:82833"/>
        <dbReference type="ChEBI" id="CHEBI:194443"/>
        <dbReference type="EC" id="2.4.99.17"/>
    </reaction>
</comment>
<comment type="pathway">
    <text evidence="1">tRNA modification; tRNA-queuosine biosynthesis.</text>
</comment>
<comment type="subunit">
    <text evidence="1">Monomer.</text>
</comment>
<comment type="subcellular location">
    <subcellularLocation>
        <location evidence="1">Cytoplasm</location>
    </subcellularLocation>
</comment>
<comment type="similarity">
    <text evidence="1">Belongs to the QueA family.</text>
</comment>
<accession>Q0BYK7</accession>
<evidence type="ECO:0000255" key="1">
    <source>
        <dbReference type="HAMAP-Rule" id="MF_00113"/>
    </source>
</evidence>
<sequence length="351" mass="38391">MDLSVFQFDLPEDLIALRPAQPQDAARLLVVHGDGRLIDATVRDLPKYLNTGDVLVFNDTRVLPAALKGVRPARDGASRDVEVDVNLVERQGDCLWLALARPGRRLKDGDEIFFAEGFSARIASRREGGEILLDFNCEGEAMIAALDAHGAMPLPPYIARRRPADAEDRETYQTRFAGEDAASVAAPTAGLHFTPRLLAEVEAAGLKRETVRLHVGLGTFKPLEDRHLSENRLHEEWRRITPEVADRLNAARAAGARLVPVGTTAMRTLESCAGEDGQIHAATGPTDIFLKPGDPVRATDALMTNFHLPGSSLFMLVSALMGTSLMRAAYAHAIEEKYRFYSYGDACLLLP</sequence>
<name>QUEA_HYPNA</name>
<proteinExistence type="inferred from homology"/>
<dbReference type="EC" id="2.4.99.17" evidence="1"/>
<dbReference type="EMBL" id="CP000158">
    <property type="protein sequence ID" value="ABI76100.1"/>
    <property type="molecule type" value="Genomic_DNA"/>
</dbReference>
<dbReference type="RefSeq" id="WP_011647733.1">
    <property type="nucleotide sequence ID" value="NC_008358.1"/>
</dbReference>
<dbReference type="SMR" id="Q0BYK7"/>
<dbReference type="STRING" id="228405.HNE_2757"/>
<dbReference type="KEGG" id="hne:HNE_2757"/>
<dbReference type="eggNOG" id="COG0809">
    <property type="taxonomic scope" value="Bacteria"/>
</dbReference>
<dbReference type="HOGENOM" id="CLU_039110_1_0_5"/>
<dbReference type="UniPathway" id="UPA00392"/>
<dbReference type="Proteomes" id="UP000001959">
    <property type="component" value="Chromosome"/>
</dbReference>
<dbReference type="GO" id="GO:0005737">
    <property type="term" value="C:cytoplasm"/>
    <property type="evidence" value="ECO:0007669"/>
    <property type="project" value="UniProtKB-SubCell"/>
</dbReference>
<dbReference type="GO" id="GO:0051075">
    <property type="term" value="F:S-adenosylmethionine:tRNA ribosyltransferase-isomerase activity"/>
    <property type="evidence" value="ECO:0007669"/>
    <property type="project" value="UniProtKB-EC"/>
</dbReference>
<dbReference type="GO" id="GO:0008616">
    <property type="term" value="P:queuosine biosynthetic process"/>
    <property type="evidence" value="ECO:0007669"/>
    <property type="project" value="UniProtKB-UniRule"/>
</dbReference>
<dbReference type="GO" id="GO:0002099">
    <property type="term" value="P:tRNA wobble guanine modification"/>
    <property type="evidence" value="ECO:0007669"/>
    <property type="project" value="TreeGrafter"/>
</dbReference>
<dbReference type="Gene3D" id="2.40.10.240">
    <property type="entry name" value="QueA-like"/>
    <property type="match status" value="1"/>
</dbReference>
<dbReference type="Gene3D" id="3.40.1780.10">
    <property type="entry name" value="QueA-like"/>
    <property type="match status" value="1"/>
</dbReference>
<dbReference type="HAMAP" id="MF_00113">
    <property type="entry name" value="QueA"/>
    <property type="match status" value="1"/>
</dbReference>
<dbReference type="InterPro" id="IPR003699">
    <property type="entry name" value="QueA"/>
</dbReference>
<dbReference type="InterPro" id="IPR042118">
    <property type="entry name" value="QueA_dom1"/>
</dbReference>
<dbReference type="InterPro" id="IPR042119">
    <property type="entry name" value="QueA_dom2"/>
</dbReference>
<dbReference type="InterPro" id="IPR036100">
    <property type="entry name" value="QueA_sf"/>
</dbReference>
<dbReference type="NCBIfam" id="NF001140">
    <property type="entry name" value="PRK00147.1"/>
    <property type="match status" value="1"/>
</dbReference>
<dbReference type="NCBIfam" id="TIGR00113">
    <property type="entry name" value="queA"/>
    <property type="match status" value="1"/>
</dbReference>
<dbReference type="PANTHER" id="PTHR30307">
    <property type="entry name" value="S-ADENOSYLMETHIONINE:TRNA RIBOSYLTRANSFERASE-ISOMERASE"/>
    <property type="match status" value="1"/>
</dbReference>
<dbReference type="PANTHER" id="PTHR30307:SF0">
    <property type="entry name" value="S-ADENOSYLMETHIONINE:TRNA RIBOSYLTRANSFERASE-ISOMERASE"/>
    <property type="match status" value="1"/>
</dbReference>
<dbReference type="Pfam" id="PF02547">
    <property type="entry name" value="Queuosine_synth"/>
    <property type="match status" value="1"/>
</dbReference>
<dbReference type="SUPFAM" id="SSF111337">
    <property type="entry name" value="QueA-like"/>
    <property type="match status" value="1"/>
</dbReference>
<reference key="1">
    <citation type="journal article" date="2006" name="J. Bacteriol.">
        <title>Comparative genomic evidence for a close relationship between the dimorphic prosthecate bacteria Hyphomonas neptunium and Caulobacter crescentus.</title>
        <authorList>
            <person name="Badger J.H."/>
            <person name="Hoover T.R."/>
            <person name="Brun Y.V."/>
            <person name="Weiner R.M."/>
            <person name="Laub M.T."/>
            <person name="Alexandre G."/>
            <person name="Mrazek J."/>
            <person name="Ren Q."/>
            <person name="Paulsen I.T."/>
            <person name="Nelson K.E."/>
            <person name="Khouri H.M."/>
            <person name="Radune D."/>
            <person name="Sosa J."/>
            <person name="Dodson R.J."/>
            <person name="Sullivan S.A."/>
            <person name="Rosovitz M.J."/>
            <person name="Madupu R."/>
            <person name="Brinkac L.M."/>
            <person name="Durkin A.S."/>
            <person name="Daugherty S.C."/>
            <person name="Kothari S.P."/>
            <person name="Giglio M.G."/>
            <person name="Zhou L."/>
            <person name="Haft D.H."/>
            <person name="Selengut J.D."/>
            <person name="Davidsen T.M."/>
            <person name="Yang Q."/>
            <person name="Zafar N."/>
            <person name="Ward N.L."/>
        </authorList>
    </citation>
    <scope>NUCLEOTIDE SEQUENCE [LARGE SCALE GENOMIC DNA]</scope>
    <source>
        <strain>ATCC 15444</strain>
    </source>
</reference>
<keyword id="KW-0963">Cytoplasm</keyword>
<keyword id="KW-0671">Queuosine biosynthesis</keyword>
<keyword id="KW-1185">Reference proteome</keyword>
<keyword id="KW-0949">S-adenosyl-L-methionine</keyword>
<keyword id="KW-0808">Transferase</keyword>